<feature type="chain" id="PRO_0000216349" description="Probable ketoamine kinase VP1481">
    <location>
        <begin position="1"/>
        <end position="288"/>
    </location>
</feature>
<feature type="active site" description="Proton acceptor" evidence="1">
    <location>
        <position position="195"/>
    </location>
</feature>
<feature type="binding site" evidence="3">
    <location>
        <begin position="92"/>
        <end position="94"/>
    </location>
    <ligand>
        <name>ATP</name>
        <dbReference type="ChEBI" id="CHEBI:30616"/>
    </ligand>
</feature>
<dbReference type="EC" id="2.7.1.-" evidence="2"/>
<dbReference type="EMBL" id="BA000031">
    <property type="protein sequence ID" value="BAC59744.1"/>
    <property type="molecule type" value="Genomic_DNA"/>
</dbReference>
<dbReference type="RefSeq" id="NP_797860.1">
    <property type="nucleotide sequence ID" value="NC_004603.1"/>
</dbReference>
<dbReference type="RefSeq" id="WP_005455078.1">
    <property type="nucleotide sequence ID" value="NC_004603.1"/>
</dbReference>
<dbReference type="SMR" id="Q87PM1"/>
<dbReference type="GeneID" id="1188988"/>
<dbReference type="KEGG" id="vpa:VP1481"/>
<dbReference type="PATRIC" id="fig|223926.6.peg.1415"/>
<dbReference type="eggNOG" id="COG3001">
    <property type="taxonomic scope" value="Bacteria"/>
</dbReference>
<dbReference type="HOGENOM" id="CLU_036517_0_0_6"/>
<dbReference type="Proteomes" id="UP000002493">
    <property type="component" value="Chromosome 1"/>
</dbReference>
<dbReference type="GO" id="GO:0005524">
    <property type="term" value="F:ATP binding"/>
    <property type="evidence" value="ECO:0007669"/>
    <property type="project" value="UniProtKB-KW"/>
</dbReference>
<dbReference type="GO" id="GO:0016301">
    <property type="term" value="F:kinase activity"/>
    <property type="evidence" value="ECO:0007669"/>
    <property type="project" value="UniProtKB-KW"/>
</dbReference>
<dbReference type="Gene3D" id="3.90.1200.10">
    <property type="match status" value="1"/>
</dbReference>
<dbReference type="Gene3D" id="3.30.200.20">
    <property type="entry name" value="Phosphorylase Kinase, domain 1"/>
    <property type="match status" value="1"/>
</dbReference>
<dbReference type="InterPro" id="IPR016477">
    <property type="entry name" value="Fructo-/Ketosamine-3-kinase"/>
</dbReference>
<dbReference type="InterPro" id="IPR011009">
    <property type="entry name" value="Kinase-like_dom_sf"/>
</dbReference>
<dbReference type="PANTHER" id="PTHR12149">
    <property type="entry name" value="FRUCTOSAMINE 3 KINASE-RELATED PROTEIN"/>
    <property type="match status" value="1"/>
</dbReference>
<dbReference type="PANTHER" id="PTHR12149:SF8">
    <property type="entry name" value="PROTEIN-RIBULOSAMINE 3-KINASE"/>
    <property type="match status" value="1"/>
</dbReference>
<dbReference type="Pfam" id="PF03881">
    <property type="entry name" value="Fructosamin_kin"/>
    <property type="match status" value="1"/>
</dbReference>
<dbReference type="PIRSF" id="PIRSF006221">
    <property type="entry name" value="Ketosamine-3-kinase"/>
    <property type="match status" value="1"/>
</dbReference>
<dbReference type="SUPFAM" id="SSF56112">
    <property type="entry name" value="Protein kinase-like (PK-like)"/>
    <property type="match status" value="1"/>
</dbReference>
<accession>Q87PM1</accession>
<protein>
    <recommendedName>
        <fullName>Probable ketoamine kinase VP1481</fullName>
        <ecNumber evidence="2">2.7.1.-</ecNumber>
    </recommendedName>
</protein>
<proteinExistence type="inferred from homology"/>
<gene>
    <name type="ordered locus">VP1481</name>
</gene>
<name>KT3K_VIBPA</name>
<sequence length="288" mass="33490">MWQAISQQLSDTLLFEYQITEKVRLSGGDISESYMINDGEQRYFVKINDREFLHKFEVEAESLHLLRETSTIFVPEVVLVGKTKNNAFIILNYLPTKPLDDPENSFKFGQQLAQLHQWGEQKEFGFDTDNYLGSTLQPNQWHKKWCMFFAEQRIGWQLQLLKEKGVTLVDIDDFIDVVKQLLANHTPEPSLLHGDLWNGNVALTAFGPICFDPACYWGDRECDIAMTELFGGFQPEFYQGYESVMPLLPGYHERKDIYNLYHILNHCNLFGGHYLEQAQLTINKIISY</sequence>
<reference key="1">
    <citation type="journal article" date="2003" name="Lancet">
        <title>Genome sequence of Vibrio parahaemolyticus: a pathogenic mechanism distinct from that of V. cholerae.</title>
        <authorList>
            <person name="Makino K."/>
            <person name="Oshima K."/>
            <person name="Kurokawa K."/>
            <person name="Yokoyama K."/>
            <person name="Uda T."/>
            <person name="Tagomori K."/>
            <person name="Iijima Y."/>
            <person name="Najima M."/>
            <person name="Nakano M."/>
            <person name="Yamashita A."/>
            <person name="Kubota Y."/>
            <person name="Kimura S."/>
            <person name="Yasunaga T."/>
            <person name="Honda T."/>
            <person name="Shinagawa H."/>
            <person name="Hattori M."/>
            <person name="Iida T."/>
        </authorList>
    </citation>
    <scope>NUCLEOTIDE SEQUENCE [LARGE SCALE GENOMIC DNA]</scope>
    <source>
        <strain>RIMD 2210633</strain>
    </source>
</reference>
<comment type="function">
    <text evidence="2">Ketoamine kinase that phosphorylates ketoamines on the third carbon of the sugar moiety to generate ketoamine 3-phosphate.</text>
</comment>
<comment type="similarity">
    <text evidence="4">Belongs to the fructosamine kinase family.</text>
</comment>
<evidence type="ECO:0000250" key="1">
    <source>
        <dbReference type="UniProtKB" id="P9WI99"/>
    </source>
</evidence>
<evidence type="ECO:0000250" key="2">
    <source>
        <dbReference type="UniProtKB" id="Q9H479"/>
    </source>
</evidence>
<evidence type="ECO:0000250" key="3">
    <source>
        <dbReference type="UniProtKB" id="Q9HA64"/>
    </source>
</evidence>
<evidence type="ECO:0000305" key="4"/>
<organism>
    <name type="scientific">Vibrio parahaemolyticus serotype O3:K6 (strain RIMD 2210633)</name>
    <dbReference type="NCBI Taxonomy" id="223926"/>
    <lineage>
        <taxon>Bacteria</taxon>
        <taxon>Pseudomonadati</taxon>
        <taxon>Pseudomonadota</taxon>
        <taxon>Gammaproteobacteria</taxon>
        <taxon>Vibrionales</taxon>
        <taxon>Vibrionaceae</taxon>
        <taxon>Vibrio</taxon>
    </lineage>
</organism>
<keyword id="KW-0067">ATP-binding</keyword>
<keyword id="KW-0418">Kinase</keyword>
<keyword id="KW-0547">Nucleotide-binding</keyword>
<keyword id="KW-0808">Transferase</keyword>